<comment type="function">
    <text evidence="1">Catalyzes the ATP-dependent amination of UTP to CTP with either L-glutamine or ammonia as the source of nitrogen. Regulates intracellular CTP levels through interactions with the four ribonucleotide triphosphates.</text>
</comment>
<comment type="catalytic activity">
    <reaction evidence="1">
        <text>UTP + L-glutamine + ATP + H2O = CTP + L-glutamate + ADP + phosphate + 2 H(+)</text>
        <dbReference type="Rhea" id="RHEA:26426"/>
        <dbReference type="ChEBI" id="CHEBI:15377"/>
        <dbReference type="ChEBI" id="CHEBI:15378"/>
        <dbReference type="ChEBI" id="CHEBI:29985"/>
        <dbReference type="ChEBI" id="CHEBI:30616"/>
        <dbReference type="ChEBI" id="CHEBI:37563"/>
        <dbReference type="ChEBI" id="CHEBI:43474"/>
        <dbReference type="ChEBI" id="CHEBI:46398"/>
        <dbReference type="ChEBI" id="CHEBI:58359"/>
        <dbReference type="ChEBI" id="CHEBI:456216"/>
        <dbReference type="EC" id="6.3.4.2"/>
    </reaction>
</comment>
<comment type="catalytic activity">
    <reaction evidence="1">
        <text>L-glutamine + H2O = L-glutamate + NH4(+)</text>
        <dbReference type="Rhea" id="RHEA:15889"/>
        <dbReference type="ChEBI" id="CHEBI:15377"/>
        <dbReference type="ChEBI" id="CHEBI:28938"/>
        <dbReference type="ChEBI" id="CHEBI:29985"/>
        <dbReference type="ChEBI" id="CHEBI:58359"/>
    </reaction>
</comment>
<comment type="catalytic activity">
    <reaction evidence="1">
        <text>UTP + NH4(+) + ATP = CTP + ADP + phosphate + 2 H(+)</text>
        <dbReference type="Rhea" id="RHEA:16597"/>
        <dbReference type="ChEBI" id="CHEBI:15378"/>
        <dbReference type="ChEBI" id="CHEBI:28938"/>
        <dbReference type="ChEBI" id="CHEBI:30616"/>
        <dbReference type="ChEBI" id="CHEBI:37563"/>
        <dbReference type="ChEBI" id="CHEBI:43474"/>
        <dbReference type="ChEBI" id="CHEBI:46398"/>
        <dbReference type="ChEBI" id="CHEBI:456216"/>
    </reaction>
</comment>
<comment type="activity regulation">
    <text evidence="1">Allosterically activated by GTP, when glutamine is the substrate; GTP has no effect on the reaction when ammonia is the substrate. The allosteric effector GTP functions by stabilizing the protein conformation that binds the tetrahedral intermediate(s) formed during glutamine hydrolysis. Inhibited by the product CTP, via allosteric rather than competitive inhibition.</text>
</comment>
<comment type="pathway">
    <text evidence="1">Pyrimidine metabolism; CTP biosynthesis via de novo pathway; CTP from UDP: step 2/2.</text>
</comment>
<comment type="subunit">
    <text evidence="1">Homotetramer.</text>
</comment>
<comment type="miscellaneous">
    <text evidence="1">CTPSs have evolved a hybrid strategy for distinguishing between UTP and CTP. The overlapping regions of the product feedback inhibitory and substrate sites recognize a common feature in both compounds, the triphosphate moiety. To differentiate isosteric substrate and product pyrimidine rings, an additional pocket far from the expected kinase/ligase catalytic site, specifically recognizes the cytosine and ribose portions of the product inhibitor.</text>
</comment>
<comment type="similarity">
    <text evidence="1">Belongs to the CTP synthase family.</text>
</comment>
<protein>
    <recommendedName>
        <fullName evidence="1">CTP synthase</fullName>
        <ecNumber evidence="1">6.3.4.2</ecNumber>
    </recommendedName>
    <alternativeName>
        <fullName evidence="1">Cytidine 5'-triphosphate synthase</fullName>
    </alternativeName>
    <alternativeName>
        <fullName evidence="1">Cytidine triphosphate synthetase</fullName>
        <shortName evidence="1">CTP synthetase</shortName>
        <shortName evidence="1">CTPS</shortName>
    </alternativeName>
    <alternativeName>
        <fullName evidence="1">UTP--ammonia ligase</fullName>
    </alternativeName>
</protein>
<feature type="chain" id="PRO_1000139611" description="CTP synthase">
    <location>
        <begin position="1"/>
        <end position="545"/>
    </location>
</feature>
<feature type="domain" description="Glutamine amidotransferase type-1" evidence="1">
    <location>
        <begin position="291"/>
        <end position="542"/>
    </location>
</feature>
<feature type="region of interest" description="Amidoligase domain" evidence="1">
    <location>
        <begin position="1"/>
        <end position="266"/>
    </location>
</feature>
<feature type="active site" description="Nucleophile; for glutamine hydrolysis" evidence="1">
    <location>
        <position position="379"/>
    </location>
</feature>
<feature type="active site" evidence="1">
    <location>
        <position position="515"/>
    </location>
</feature>
<feature type="active site" evidence="1">
    <location>
        <position position="517"/>
    </location>
</feature>
<feature type="binding site" evidence="1">
    <location>
        <position position="14"/>
    </location>
    <ligand>
        <name>CTP</name>
        <dbReference type="ChEBI" id="CHEBI:37563"/>
        <note>allosteric inhibitor</note>
    </ligand>
</feature>
<feature type="binding site" evidence="1">
    <location>
        <position position="14"/>
    </location>
    <ligand>
        <name>UTP</name>
        <dbReference type="ChEBI" id="CHEBI:46398"/>
    </ligand>
</feature>
<feature type="binding site" evidence="1">
    <location>
        <begin position="15"/>
        <end position="20"/>
    </location>
    <ligand>
        <name>ATP</name>
        <dbReference type="ChEBI" id="CHEBI:30616"/>
    </ligand>
</feature>
<feature type="binding site" evidence="1">
    <location>
        <position position="72"/>
    </location>
    <ligand>
        <name>ATP</name>
        <dbReference type="ChEBI" id="CHEBI:30616"/>
    </ligand>
</feature>
<feature type="binding site" evidence="1">
    <location>
        <position position="72"/>
    </location>
    <ligand>
        <name>Mg(2+)</name>
        <dbReference type="ChEBI" id="CHEBI:18420"/>
    </ligand>
</feature>
<feature type="binding site" evidence="1">
    <location>
        <position position="140"/>
    </location>
    <ligand>
        <name>Mg(2+)</name>
        <dbReference type="ChEBI" id="CHEBI:18420"/>
    </ligand>
</feature>
<feature type="binding site" evidence="1">
    <location>
        <begin position="147"/>
        <end position="149"/>
    </location>
    <ligand>
        <name>CTP</name>
        <dbReference type="ChEBI" id="CHEBI:37563"/>
        <note>allosteric inhibitor</note>
    </ligand>
</feature>
<feature type="binding site" evidence="1">
    <location>
        <begin position="187"/>
        <end position="192"/>
    </location>
    <ligand>
        <name>CTP</name>
        <dbReference type="ChEBI" id="CHEBI:37563"/>
        <note>allosteric inhibitor</note>
    </ligand>
</feature>
<feature type="binding site" evidence="1">
    <location>
        <begin position="187"/>
        <end position="192"/>
    </location>
    <ligand>
        <name>UTP</name>
        <dbReference type="ChEBI" id="CHEBI:46398"/>
    </ligand>
</feature>
<feature type="binding site" evidence="1">
    <location>
        <position position="223"/>
    </location>
    <ligand>
        <name>CTP</name>
        <dbReference type="ChEBI" id="CHEBI:37563"/>
        <note>allosteric inhibitor</note>
    </ligand>
</feature>
<feature type="binding site" evidence="1">
    <location>
        <position position="223"/>
    </location>
    <ligand>
        <name>UTP</name>
        <dbReference type="ChEBI" id="CHEBI:46398"/>
    </ligand>
</feature>
<feature type="binding site" evidence="1">
    <location>
        <begin position="239"/>
        <end position="241"/>
    </location>
    <ligand>
        <name>ATP</name>
        <dbReference type="ChEBI" id="CHEBI:30616"/>
    </ligand>
</feature>
<feature type="binding site" evidence="1">
    <location>
        <position position="352"/>
    </location>
    <ligand>
        <name>L-glutamine</name>
        <dbReference type="ChEBI" id="CHEBI:58359"/>
    </ligand>
</feature>
<feature type="binding site" evidence="1">
    <location>
        <begin position="380"/>
        <end position="383"/>
    </location>
    <ligand>
        <name>L-glutamine</name>
        <dbReference type="ChEBI" id="CHEBI:58359"/>
    </ligand>
</feature>
<feature type="binding site" evidence="1">
    <location>
        <position position="403"/>
    </location>
    <ligand>
        <name>L-glutamine</name>
        <dbReference type="ChEBI" id="CHEBI:58359"/>
    </ligand>
</feature>
<feature type="binding site" evidence="1">
    <location>
        <position position="470"/>
    </location>
    <ligand>
        <name>L-glutamine</name>
        <dbReference type="ChEBI" id="CHEBI:58359"/>
    </ligand>
</feature>
<evidence type="ECO:0000255" key="1">
    <source>
        <dbReference type="HAMAP-Rule" id="MF_01227"/>
    </source>
</evidence>
<reference key="1">
    <citation type="submission" date="2008-02" db="EMBL/GenBank/DDBJ databases">
        <title>Complete sequence of Yersinia pseudotuberculosis YPIII.</title>
        <authorList>
            <consortium name="US DOE Joint Genome Institute"/>
            <person name="Copeland A."/>
            <person name="Lucas S."/>
            <person name="Lapidus A."/>
            <person name="Glavina del Rio T."/>
            <person name="Dalin E."/>
            <person name="Tice H."/>
            <person name="Bruce D."/>
            <person name="Goodwin L."/>
            <person name="Pitluck S."/>
            <person name="Munk A.C."/>
            <person name="Brettin T."/>
            <person name="Detter J.C."/>
            <person name="Han C."/>
            <person name="Tapia R."/>
            <person name="Schmutz J."/>
            <person name="Larimer F."/>
            <person name="Land M."/>
            <person name="Hauser L."/>
            <person name="Challacombe J.F."/>
            <person name="Green L."/>
            <person name="Lindler L.E."/>
            <person name="Nikolich M.P."/>
            <person name="Richardson P."/>
        </authorList>
    </citation>
    <scope>NUCLEOTIDE SEQUENCE [LARGE SCALE GENOMIC DNA]</scope>
    <source>
        <strain>YPIII</strain>
    </source>
</reference>
<accession>B1JK10</accession>
<name>PYRG_YERPY</name>
<gene>
    <name evidence="1" type="primary">pyrG</name>
    <name type="ordered locus">YPK_3447</name>
</gene>
<organism>
    <name type="scientific">Yersinia pseudotuberculosis serotype O:3 (strain YPIII)</name>
    <dbReference type="NCBI Taxonomy" id="502800"/>
    <lineage>
        <taxon>Bacteria</taxon>
        <taxon>Pseudomonadati</taxon>
        <taxon>Pseudomonadota</taxon>
        <taxon>Gammaproteobacteria</taxon>
        <taxon>Enterobacterales</taxon>
        <taxon>Yersiniaceae</taxon>
        <taxon>Yersinia</taxon>
    </lineage>
</organism>
<proteinExistence type="inferred from homology"/>
<keyword id="KW-0067">ATP-binding</keyword>
<keyword id="KW-0315">Glutamine amidotransferase</keyword>
<keyword id="KW-0436">Ligase</keyword>
<keyword id="KW-0460">Magnesium</keyword>
<keyword id="KW-0479">Metal-binding</keyword>
<keyword id="KW-0547">Nucleotide-binding</keyword>
<keyword id="KW-0665">Pyrimidine biosynthesis</keyword>
<sequence>MTTNYIFVTGGVVSSLGKGIAAASLAAILEARGLNVTIMKLDPYINVDPGTMSPTQHGEVFVTEDGAETDLDLGHYERFIRTKMTRRNNFTTGRIYSEVLRKERRGDYLGATIQVIPHITNAIKERIIEGGEGHDVVLVEIGGTVGDIESLPFLEAIRQMAVDVGREHTLYMHLTLVPYLAAAGEVKTKPTQHSVKELLSIGIQPDVLICRSDRAVPANERAKIALFCNVPEKAVISLKDVDSIYKIPGLLKSQGLDDYICKRFSLTCPEANLAEWEQVLYEESNPGGEVTIGMIGKYVELPDAYKSVIEALKHGGLKNRLTVNIKLIDSQDVETRGEEMLKELDAILIPGGFGYRGVEGKVLAARYAREHNIPYLGICLGMQVALMEFARNVAGMENANSTEFVPDCKYPVVALITEWRDEDGNVEIRTEESDLGGTMRVGGQQCHLTEGSLVRQMYGEPTIVERHRHRYEVNNMLLKQIEAAGLRVAGRSADNKLVEIIELPDHPWFVACQFHPEFTSTPRDGHPLFAGFVKAAGDYQKRQVK</sequence>
<dbReference type="EC" id="6.3.4.2" evidence="1"/>
<dbReference type="EMBL" id="CP000950">
    <property type="protein sequence ID" value="ACA69714.1"/>
    <property type="molecule type" value="Genomic_DNA"/>
</dbReference>
<dbReference type="RefSeq" id="WP_002209376.1">
    <property type="nucleotide sequence ID" value="NZ_CP009792.1"/>
</dbReference>
<dbReference type="SMR" id="B1JK10"/>
<dbReference type="MEROPS" id="C26.964"/>
<dbReference type="GeneID" id="96664251"/>
<dbReference type="KEGG" id="ypy:YPK_3447"/>
<dbReference type="PATRIC" id="fig|502800.11.peg.4186"/>
<dbReference type="UniPathway" id="UPA00159">
    <property type="reaction ID" value="UER00277"/>
</dbReference>
<dbReference type="GO" id="GO:0005829">
    <property type="term" value="C:cytosol"/>
    <property type="evidence" value="ECO:0007669"/>
    <property type="project" value="TreeGrafter"/>
</dbReference>
<dbReference type="GO" id="GO:0005524">
    <property type="term" value="F:ATP binding"/>
    <property type="evidence" value="ECO:0007669"/>
    <property type="project" value="UniProtKB-KW"/>
</dbReference>
<dbReference type="GO" id="GO:0003883">
    <property type="term" value="F:CTP synthase activity"/>
    <property type="evidence" value="ECO:0007669"/>
    <property type="project" value="UniProtKB-UniRule"/>
</dbReference>
<dbReference type="GO" id="GO:0004359">
    <property type="term" value="F:glutaminase activity"/>
    <property type="evidence" value="ECO:0007669"/>
    <property type="project" value="RHEA"/>
</dbReference>
<dbReference type="GO" id="GO:0042802">
    <property type="term" value="F:identical protein binding"/>
    <property type="evidence" value="ECO:0007669"/>
    <property type="project" value="TreeGrafter"/>
</dbReference>
<dbReference type="GO" id="GO:0046872">
    <property type="term" value="F:metal ion binding"/>
    <property type="evidence" value="ECO:0007669"/>
    <property type="project" value="UniProtKB-KW"/>
</dbReference>
<dbReference type="GO" id="GO:0044210">
    <property type="term" value="P:'de novo' CTP biosynthetic process"/>
    <property type="evidence" value="ECO:0007669"/>
    <property type="project" value="UniProtKB-UniRule"/>
</dbReference>
<dbReference type="GO" id="GO:0019856">
    <property type="term" value="P:pyrimidine nucleobase biosynthetic process"/>
    <property type="evidence" value="ECO:0007669"/>
    <property type="project" value="TreeGrafter"/>
</dbReference>
<dbReference type="CDD" id="cd03113">
    <property type="entry name" value="CTPS_N"/>
    <property type="match status" value="1"/>
</dbReference>
<dbReference type="CDD" id="cd01746">
    <property type="entry name" value="GATase1_CTP_Synthase"/>
    <property type="match status" value="1"/>
</dbReference>
<dbReference type="FunFam" id="3.40.50.300:FF:000009">
    <property type="entry name" value="CTP synthase"/>
    <property type="match status" value="1"/>
</dbReference>
<dbReference type="FunFam" id="3.40.50.880:FF:000002">
    <property type="entry name" value="CTP synthase"/>
    <property type="match status" value="1"/>
</dbReference>
<dbReference type="Gene3D" id="3.40.50.880">
    <property type="match status" value="1"/>
</dbReference>
<dbReference type="Gene3D" id="3.40.50.300">
    <property type="entry name" value="P-loop containing nucleotide triphosphate hydrolases"/>
    <property type="match status" value="1"/>
</dbReference>
<dbReference type="HAMAP" id="MF_01227">
    <property type="entry name" value="PyrG"/>
    <property type="match status" value="1"/>
</dbReference>
<dbReference type="InterPro" id="IPR029062">
    <property type="entry name" value="Class_I_gatase-like"/>
</dbReference>
<dbReference type="InterPro" id="IPR004468">
    <property type="entry name" value="CTP_synthase"/>
</dbReference>
<dbReference type="InterPro" id="IPR017456">
    <property type="entry name" value="CTP_synthase_N"/>
</dbReference>
<dbReference type="InterPro" id="IPR017926">
    <property type="entry name" value="GATASE"/>
</dbReference>
<dbReference type="InterPro" id="IPR033828">
    <property type="entry name" value="GATase1_CTP_Synthase"/>
</dbReference>
<dbReference type="InterPro" id="IPR027417">
    <property type="entry name" value="P-loop_NTPase"/>
</dbReference>
<dbReference type="NCBIfam" id="NF003792">
    <property type="entry name" value="PRK05380.1"/>
    <property type="match status" value="1"/>
</dbReference>
<dbReference type="NCBIfam" id="TIGR00337">
    <property type="entry name" value="PyrG"/>
    <property type="match status" value="1"/>
</dbReference>
<dbReference type="PANTHER" id="PTHR11550">
    <property type="entry name" value="CTP SYNTHASE"/>
    <property type="match status" value="1"/>
</dbReference>
<dbReference type="PANTHER" id="PTHR11550:SF0">
    <property type="entry name" value="CTP SYNTHASE-RELATED"/>
    <property type="match status" value="1"/>
</dbReference>
<dbReference type="Pfam" id="PF06418">
    <property type="entry name" value="CTP_synth_N"/>
    <property type="match status" value="1"/>
</dbReference>
<dbReference type="Pfam" id="PF00117">
    <property type="entry name" value="GATase"/>
    <property type="match status" value="1"/>
</dbReference>
<dbReference type="SUPFAM" id="SSF52317">
    <property type="entry name" value="Class I glutamine amidotransferase-like"/>
    <property type="match status" value="1"/>
</dbReference>
<dbReference type="SUPFAM" id="SSF52540">
    <property type="entry name" value="P-loop containing nucleoside triphosphate hydrolases"/>
    <property type="match status" value="1"/>
</dbReference>
<dbReference type="PROSITE" id="PS51273">
    <property type="entry name" value="GATASE_TYPE_1"/>
    <property type="match status" value="1"/>
</dbReference>